<feature type="chain" id="PRO_0000327405" description="Vacuolar fusion protein CCZ1 homolog">
    <location>
        <begin position="1"/>
        <end position="459"/>
    </location>
</feature>
<accession>A7RJI7</accession>
<gene>
    <name type="ORF">v1g238755</name>
</gene>
<organism>
    <name type="scientific">Nematostella vectensis</name>
    <name type="common">Starlet sea anemone</name>
    <dbReference type="NCBI Taxonomy" id="45351"/>
    <lineage>
        <taxon>Eukaryota</taxon>
        <taxon>Metazoa</taxon>
        <taxon>Cnidaria</taxon>
        <taxon>Anthozoa</taxon>
        <taxon>Hexacorallia</taxon>
        <taxon>Actiniaria</taxon>
        <taxon>Edwardsiidae</taxon>
        <taxon>Nematostella</taxon>
    </lineage>
</organism>
<name>CCZ1_NEMVE</name>
<protein>
    <recommendedName>
        <fullName>Vacuolar fusion protein CCZ1 homolog</fullName>
    </recommendedName>
</protein>
<reference key="1">
    <citation type="journal article" date="2007" name="Science">
        <title>Sea anemone genome reveals ancestral eumetazoan gene repertoire and genomic organization.</title>
        <authorList>
            <person name="Putnam N.H."/>
            <person name="Srivastava M."/>
            <person name="Hellsten U."/>
            <person name="Dirks B."/>
            <person name="Chapman J."/>
            <person name="Salamov A."/>
            <person name="Terry A."/>
            <person name="Shapiro H."/>
            <person name="Lindquist E."/>
            <person name="Kapitonov V.V."/>
            <person name="Jurka J."/>
            <person name="Genikhovich G."/>
            <person name="Grigoriev I.V."/>
            <person name="Lucas S.M."/>
            <person name="Steele R.E."/>
            <person name="Finnerty J.R."/>
            <person name="Technau U."/>
            <person name="Martindale M.Q."/>
            <person name="Rokhsar D.S."/>
        </authorList>
    </citation>
    <scope>NUCLEOTIDE SEQUENCE [LARGE SCALE GENOMIC DNA]</scope>
    <source>
        <strain>CH2 X CH6</strain>
    </source>
</reference>
<comment type="similarity">
    <text evidence="1">Belongs to the CCZ1 family.</text>
</comment>
<keyword id="KW-1185">Reference proteome</keyword>
<sequence length="459" mass="52996">MAAMKTTPGLVNFFIFNSTYGPREGEEHEKIILYIPTEEDIDRKIKTIGLCEALVKFTETFAPDKPCESLHTQKSRQIFYQPEPDFWMIMTISIPFSEKIAKDGKNTIEYHYDDVLDNVLDAVLKQSYKMFKLFNGPFNYLSETYGREALKKRSEYFFLSYLQTLNFSSFDLLDIFAGIQFLPLDKNTFLKIQSFVNLIEHTFSQIKYTAFLYSDKLVWSGLEQEDMRILYKYLVTSLFPATIDSELADRSSQGYVVIQPKSHHGRFVTGPPDLKDIPTPRKPPRIFVNTDTEQEELLLICYKALDATICLLVSAPFPTLDFFKKLDMFIGPQLTTLANVICEQSSKKSLSSDQQYRYIYFNHMNLAQKSTIHSKKASVAGVSPEIMRLLGDISADFNSFQEDGETYVKTMSDCWVVGRKSDQREFFVILNQKSANLIEINEEVKKLSSCHFNNIFFMD</sequence>
<proteinExistence type="inferred from homology"/>
<dbReference type="EMBL" id="DS469514">
    <property type="protein sequence ID" value="EDO48386.1"/>
    <property type="molecule type" value="Genomic_DNA"/>
</dbReference>
<dbReference type="RefSeq" id="XP_001640449.1">
    <property type="nucleotide sequence ID" value="XM_001640399.1"/>
</dbReference>
<dbReference type="SMR" id="A7RJI7"/>
<dbReference type="FunCoup" id="A7RJI7">
    <property type="interactions" value="478"/>
</dbReference>
<dbReference type="STRING" id="45351.A7RJI7"/>
<dbReference type="EnsemblMetazoa" id="EDO48386">
    <property type="protein sequence ID" value="EDO48386"/>
    <property type="gene ID" value="NEMVEDRAFT_v1g238755"/>
</dbReference>
<dbReference type="KEGG" id="nve:5520509"/>
<dbReference type="eggNOG" id="KOG2622">
    <property type="taxonomic scope" value="Eukaryota"/>
</dbReference>
<dbReference type="HOGENOM" id="CLU_037828_2_0_1"/>
<dbReference type="InParanoid" id="A7RJI7"/>
<dbReference type="OMA" id="DCQALHT"/>
<dbReference type="OrthoDB" id="240546at2759"/>
<dbReference type="PhylomeDB" id="A7RJI7"/>
<dbReference type="Proteomes" id="UP000001593">
    <property type="component" value="Unassembled WGS sequence"/>
</dbReference>
<dbReference type="GO" id="GO:0043231">
    <property type="term" value="C:intracellular membrane-bounded organelle"/>
    <property type="evidence" value="ECO:0000318"/>
    <property type="project" value="GO_Central"/>
</dbReference>
<dbReference type="GO" id="GO:0035658">
    <property type="term" value="C:Mon1-Ccz1 complex"/>
    <property type="evidence" value="ECO:0007669"/>
    <property type="project" value="InterPro"/>
</dbReference>
<dbReference type="GO" id="GO:0016192">
    <property type="term" value="P:vesicle-mediated transport"/>
    <property type="evidence" value="ECO:0000318"/>
    <property type="project" value="GO_Central"/>
</dbReference>
<dbReference type="InterPro" id="IPR013176">
    <property type="entry name" value="Ccz1"/>
</dbReference>
<dbReference type="InterPro" id="IPR043987">
    <property type="entry name" value="CCZ1/INTU/HSP4_longin_1"/>
</dbReference>
<dbReference type="InterPro" id="IPR043989">
    <property type="entry name" value="CCZ1/INTU/HSP4_longin_3"/>
</dbReference>
<dbReference type="InterPro" id="IPR043988">
    <property type="entry name" value="CCZ1/INTU_longin_2"/>
</dbReference>
<dbReference type="PANTHER" id="PTHR13056">
    <property type="entry name" value="VACUOLAR FUSION PROTEIN CCZ1 HOMOLOG-RELATED"/>
    <property type="match status" value="1"/>
</dbReference>
<dbReference type="PANTHER" id="PTHR13056:SF0">
    <property type="entry name" value="VACUOLAR FUSION PROTEIN CCZ1 HOMOLOG-RELATED"/>
    <property type="match status" value="1"/>
</dbReference>
<dbReference type="Pfam" id="PF19031">
    <property type="entry name" value="Intu_longin_1"/>
    <property type="match status" value="1"/>
</dbReference>
<dbReference type="Pfam" id="PF19032">
    <property type="entry name" value="Intu_longin_2"/>
    <property type="match status" value="1"/>
</dbReference>
<dbReference type="Pfam" id="PF19033">
    <property type="entry name" value="Intu_longin_3"/>
    <property type="match status" value="1"/>
</dbReference>
<evidence type="ECO:0000305" key="1"/>